<name>RL11_PARD8</name>
<sequence>MAKEVAGQIKLQIKGGAANPSPPVGPALGSKGINIMEFCKQFNAKTQDKAGKILPVVITYYADKSFDFVVKTPPVAIQLLEATKKKSGSAQPNRAKIAEITWDQVKAIAEDKLVDLNCFTVESAMRMVAGTARSMGITVKGTFPGNN</sequence>
<accession>A6LE85</accession>
<keyword id="KW-0488">Methylation</keyword>
<keyword id="KW-1185">Reference proteome</keyword>
<keyword id="KW-0687">Ribonucleoprotein</keyword>
<keyword id="KW-0689">Ribosomal protein</keyword>
<keyword id="KW-0694">RNA-binding</keyword>
<keyword id="KW-0699">rRNA-binding</keyword>
<protein>
    <recommendedName>
        <fullName evidence="1">Large ribosomal subunit protein uL11</fullName>
    </recommendedName>
    <alternativeName>
        <fullName evidence="2">50S ribosomal protein L11</fullName>
    </alternativeName>
</protein>
<feature type="chain" id="PRO_1000046232" description="Large ribosomal subunit protein uL11">
    <location>
        <begin position="1"/>
        <end position="147"/>
    </location>
</feature>
<reference key="1">
    <citation type="journal article" date="2007" name="PLoS Biol.">
        <title>Evolution of symbiotic bacteria in the distal human intestine.</title>
        <authorList>
            <person name="Xu J."/>
            <person name="Mahowald M.A."/>
            <person name="Ley R.E."/>
            <person name="Lozupone C.A."/>
            <person name="Hamady M."/>
            <person name="Martens E.C."/>
            <person name="Henrissat B."/>
            <person name="Coutinho P.M."/>
            <person name="Minx P."/>
            <person name="Latreille P."/>
            <person name="Cordum H."/>
            <person name="Van Brunt A."/>
            <person name="Kim K."/>
            <person name="Fulton R.S."/>
            <person name="Fulton L.A."/>
            <person name="Clifton S.W."/>
            <person name="Wilson R.K."/>
            <person name="Knight R.D."/>
            <person name="Gordon J.I."/>
        </authorList>
    </citation>
    <scope>NUCLEOTIDE SEQUENCE [LARGE SCALE GENOMIC DNA]</scope>
    <source>
        <strain>ATCC 8503 / DSM 20701 / CIP 104284 / JCM 5825 / NCTC 11152</strain>
    </source>
</reference>
<proteinExistence type="inferred from homology"/>
<gene>
    <name evidence="1" type="primary">rplK</name>
    <name type="ordered locus">BDI_2268</name>
</gene>
<dbReference type="EMBL" id="CP000140">
    <property type="protein sequence ID" value="ABR43999.1"/>
    <property type="molecule type" value="Genomic_DNA"/>
</dbReference>
<dbReference type="RefSeq" id="WP_005854215.1">
    <property type="nucleotide sequence ID" value="NC_009615.1"/>
</dbReference>
<dbReference type="SMR" id="A6LE85"/>
<dbReference type="STRING" id="435591.BDI_2268"/>
<dbReference type="PaxDb" id="435591-BDI_2268"/>
<dbReference type="KEGG" id="pdi:BDI_2268"/>
<dbReference type="eggNOG" id="COG0080">
    <property type="taxonomic scope" value="Bacteria"/>
</dbReference>
<dbReference type="HOGENOM" id="CLU_074237_2_1_10"/>
<dbReference type="BioCyc" id="PDIS435591:G1G5A-2331-MONOMER"/>
<dbReference type="Proteomes" id="UP000000566">
    <property type="component" value="Chromosome"/>
</dbReference>
<dbReference type="GO" id="GO:0022625">
    <property type="term" value="C:cytosolic large ribosomal subunit"/>
    <property type="evidence" value="ECO:0007669"/>
    <property type="project" value="TreeGrafter"/>
</dbReference>
<dbReference type="GO" id="GO:0070180">
    <property type="term" value="F:large ribosomal subunit rRNA binding"/>
    <property type="evidence" value="ECO:0007669"/>
    <property type="project" value="UniProtKB-UniRule"/>
</dbReference>
<dbReference type="GO" id="GO:0003735">
    <property type="term" value="F:structural constituent of ribosome"/>
    <property type="evidence" value="ECO:0007669"/>
    <property type="project" value="InterPro"/>
</dbReference>
<dbReference type="GO" id="GO:0006412">
    <property type="term" value="P:translation"/>
    <property type="evidence" value="ECO:0007669"/>
    <property type="project" value="UniProtKB-UniRule"/>
</dbReference>
<dbReference type="CDD" id="cd00349">
    <property type="entry name" value="Ribosomal_L11"/>
    <property type="match status" value="1"/>
</dbReference>
<dbReference type="FunFam" id="1.10.10.250:FF:000001">
    <property type="entry name" value="50S ribosomal protein L11"/>
    <property type="match status" value="1"/>
</dbReference>
<dbReference type="FunFam" id="3.30.1550.10:FF:000001">
    <property type="entry name" value="50S ribosomal protein L11"/>
    <property type="match status" value="1"/>
</dbReference>
<dbReference type="Gene3D" id="1.10.10.250">
    <property type="entry name" value="Ribosomal protein L11, C-terminal domain"/>
    <property type="match status" value="1"/>
</dbReference>
<dbReference type="Gene3D" id="3.30.1550.10">
    <property type="entry name" value="Ribosomal protein L11/L12, N-terminal domain"/>
    <property type="match status" value="1"/>
</dbReference>
<dbReference type="HAMAP" id="MF_00736">
    <property type="entry name" value="Ribosomal_uL11"/>
    <property type="match status" value="1"/>
</dbReference>
<dbReference type="InterPro" id="IPR000911">
    <property type="entry name" value="Ribosomal_uL11"/>
</dbReference>
<dbReference type="InterPro" id="IPR006519">
    <property type="entry name" value="Ribosomal_uL11_bac-typ"/>
</dbReference>
<dbReference type="InterPro" id="IPR020783">
    <property type="entry name" value="Ribosomal_uL11_C"/>
</dbReference>
<dbReference type="InterPro" id="IPR036769">
    <property type="entry name" value="Ribosomal_uL11_C_sf"/>
</dbReference>
<dbReference type="InterPro" id="IPR020785">
    <property type="entry name" value="Ribosomal_uL11_CS"/>
</dbReference>
<dbReference type="InterPro" id="IPR020784">
    <property type="entry name" value="Ribosomal_uL11_N"/>
</dbReference>
<dbReference type="InterPro" id="IPR036796">
    <property type="entry name" value="Ribosomal_uL11_N_sf"/>
</dbReference>
<dbReference type="NCBIfam" id="TIGR01632">
    <property type="entry name" value="L11_bact"/>
    <property type="match status" value="1"/>
</dbReference>
<dbReference type="PANTHER" id="PTHR11661">
    <property type="entry name" value="60S RIBOSOMAL PROTEIN L12"/>
    <property type="match status" value="1"/>
</dbReference>
<dbReference type="PANTHER" id="PTHR11661:SF1">
    <property type="entry name" value="LARGE RIBOSOMAL SUBUNIT PROTEIN UL11M"/>
    <property type="match status" value="1"/>
</dbReference>
<dbReference type="Pfam" id="PF00298">
    <property type="entry name" value="Ribosomal_L11"/>
    <property type="match status" value="1"/>
</dbReference>
<dbReference type="Pfam" id="PF03946">
    <property type="entry name" value="Ribosomal_L11_N"/>
    <property type="match status" value="1"/>
</dbReference>
<dbReference type="SMART" id="SM00649">
    <property type="entry name" value="RL11"/>
    <property type="match status" value="1"/>
</dbReference>
<dbReference type="SUPFAM" id="SSF54747">
    <property type="entry name" value="Ribosomal L11/L12e N-terminal domain"/>
    <property type="match status" value="1"/>
</dbReference>
<dbReference type="SUPFAM" id="SSF46906">
    <property type="entry name" value="Ribosomal protein L11, C-terminal domain"/>
    <property type="match status" value="1"/>
</dbReference>
<dbReference type="PROSITE" id="PS00359">
    <property type="entry name" value="RIBOSOMAL_L11"/>
    <property type="match status" value="1"/>
</dbReference>
<evidence type="ECO:0000255" key="1">
    <source>
        <dbReference type="HAMAP-Rule" id="MF_00736"/>
    </source>
</evidence>
<evidence type="ECO:0000305" key="2"/>
<organism>
    <name type="scientific">Parabacteroides distasonis (strain ATCC 8503 / DSM 20701 / CIP 104284 / JCM 5825 / NCTC 11152)</name>
    <dbReference type="NCBI Taxonomy" id="435591"/>
    <lineage>
        <taxon>Bacteria</taxon>
        <taxon>Pseudomonadati</taxon>
        <taxon>Bacteroidota</taxon>
        <taxon>Bacteroidia</taxon>
        <taxon>Bacteroidales</taxon>
        <taxon>Tannerellaceae</taxon>
        <taxon>Parabacteroides</taxon>
    </lineage>
</organism>
<comment type="function">
    <text evidence="1">Forms part of the ribosomal stalk which helps the ribosome interact with GTP-bound translation factors.</text>
</comment>
<comment type="subunit">
    <text evidence="1">Part of the ribosomal stalk of the 50S ribosomal subunit. Interacts with L10 and the large rRNA to form the base of the stalk. L10 forms an elongated spine to which L12 dimers bind in a sequential fashion forming a multimeric L10(L12)X complex.</text>
</comment>
<comment type="PTM">
    <text evidence="1">One or more lysine residues are methylated.</text>
</comment>
<comment type="similarity">
    <text evidence="1">Belongs to the universal ribosomal protein uL11 family.</text>
</comment>